<sequence>MPKFNANGLLRSFAAEMKKPWTAESLWYETVAKHPPTFQYARRIVPLYDPNKVKSRGKRLRKSMYQPQEIQWPEDKLRKRFYRDHPWELARPQIIAENDGNDQQYCDWSHMDQPRKALSGESVVQRTLWLIENSNMPVENAYDQARKEFYHLRAEQEIQQRVAHDQAQALGAVFTKSDLELGYEMDQNALNSWFDNASQYAEANRTKFTDPSVDISKTTQ</sequence>
<feature type="chain" id="PRO_0000343560" description="Small ribosomal subunit protein mS23">
    <location>
        <begin position="1"/>
        <end position="220"/>
    </location>
</feature>
<accession>O42911</accession>
<keyword id="KW-0496">Mitochondrion</keyword>
<keyword id="KW-1185">Reference proteome</keyword>
<keyword id="KW-0687">Ribonucleoprotein</keyword>
<keyword id="KW-0689">Ribosomal protein</keyword>
<name>RT25_SCHPO</name>
<dbReference type="EMBL" id="CU329671">
    <property type="protein sequence ID" value="CAA16855.1"/>
    <property type="molecule type" value="Genomic_DNA"/>
</dbReference>
<dbReference type="PIR" id="T39548">
    <property type="entry name" value="T39548"/>
</dbReference>
<dbReference type="RefSeq" id="NP_596785.1">
    <property type="nucleotide sequence ID" value="NM_001023806.2"/>
</dbReference>
<dbReference type="SMR" id="O42911"/>
<dbReference type="ComplexPortal" id="CPX-10315">
    <property type="entry name" value="37S mitochondrial small ribosomal subunit"/>
</dbReference>
<dbReference type="FunCoup" id="O42911">
    <property type="interactions" value="288"/>
</dbReference>
<dbReference type="STRING" id="284812.O42911"/>
<dbReference type="iPTMnet" id="O42911"/>
<dbReference type="PaxDb" id="4896-SPBC16A3.04.1"/>
<dbReference type="EnsemblFungi" id="SPBC16A3.04.1">
    <property type="protein sequence ID" value="SPBC16A3.04.1:pep"/>
    <property type="gene ID" value="SPBC16A3.04"/>
</dbReference>
<dbReference type="GeneID" id="2539878"/>
<dbReference type="KEGG" id="spo:2539878"/>
<dbReference type="PomBase" id="SPBC16A3.04">
    <property type="gene designation" value="rsm25"/>
</dbReference>
<dbReference type="VEuPathDB" id="FungiDB:SPBC16A3.04"/>
<dbReference type="eggNOG" id="ENOG502RZQQ">
    <property type="taxonomic scope" value="Eukaryota"/>
</dbReference>
<dbReference type="HOGENOM" id="CLU_081350_0_0_1"/>
<dbReference type="InParanoid" id="O42911"/>
<dbReference type="OMA" id="WELARPQ"/>
<dbReference type="PhylomeDB" id="O42911"/>
<dbReference type="PRO" id="PR:O42911"/>
<dbReference type="Proteomes" id="UP000002485">
    <property type="component" value="Chromosome II"/>
</dbReference>
<dbReference type="GO" id="GO:0005763">
    <property type="term" value="C:mitochondrial small ribosomal subunit"/>
    <property type="evidence" value="ECO:0000250"/>
    <property type="project" value="PomBase"/>
</dbReference>
<dbReference type="GO" id="GO:0005739">
    <property type="term" value="C:mitochondrion"/>
    <property type="evidence" value="ECO:0007005"/>
    <property type="project" value="PomBase"/>
</dbReference>
<dbReference type="GO" id="GO:0003735">
    <property type="term" value="F:structural constituent of ribosome"/>
    <property type="evidence" value="ECO:0000250"/>
    <property type="project" value="PomBase"/>
</dbReference>
<dbReference type="GO" id="GO:0032543">
    <property type="term" value="P:mitochondrial translation"/>
    <property type="evidence" value="ECO:0000250"/>
    <property type="project" value="PomBase"/>
</dbReference>
<dbReference type="CDD" id="cd23701">
    <property type="entry name" value="At1g26750"/>
    <property type="match status" value="1"/>
</dbReference>
<dbReference type="InterPro" id="IPR016939">
    <property type="entry name" value="Ribosomal_mS23_fun"/>
</dbReference>
<dbReference type="PANTHER" id="PTHR37799">
    <property type="entry name" value="37S RIBOSOMAL PROTEIN S25, MITOCHONDRIAL"/>
    <property type="match status" value="1"/>
</dbReference>
<dbReference type="PANTHER" id="PTHR37799:SF1">
    <property type="entry name" value="SMALL RIBOSOMAL SUBUNIT PROTEIN MS23"/>
    <property type="match status" value="1"/>
</dbReference>
<dbReference type="Pfam" id="PF13741">
    <property type="entry name" value="MRP-S25"/>
    <property type="match status" value="1"/>
</dbReference>
<dbReference type="PIRSF" id="PIRSF029764">
    <property type="entry name" value="RSM25"/>
    <property type="match status" value="1"/>
</dbReference>
<protein>
    <recommendedName>
        <fullName evidence="3">Small ribosomal subunit protein mS23</fullName>
    </recommendedName>
    <alternativeName>
        <fullName>37S ribosomal protein S25, mitochondrial</fullName>
    </alternativeName>
</protein>
<evidence type="ECO:0000250" key="1">
    <source>
        <dbReference type="UniProtKB" id="P40496"/>
    </source>
</evidence>
<evidence type="ECO:0000269" key="2">
    <source>
    </source>
</evidence>
<evidence type="ECO:0000305" key="3"/>
<proteinExistence type="inferred from homology"/>
<comment type="function">
    <text evidence="1">Component of the mitochondrial ribosome (mitoribosome), a dedicated translation machinery responsible for the synthesis of mitochondrial genome-encoded proteins, including at least some of the essential transmembrane subunits of the mitochondrial respiratory chain. The mitoribosomes are attached to the mitochondrial inner membrane and translation products are cotranslationally integrated into the membrane.</text>
</comment>
<comment type="subunit">
    <text evidence="1">Component of the mitochondrial small ribosomal subunit (mt-SSU). Mature yeast 74S mitochondrial ribosomes consist of a small (37S) and a large (54S) subunit. The 37S small subunit contains a 15S ribosomal RNA (15S mt-rRNA) and at least 32 different proteins. The 54S large subunit contains a 21S rRNA (21S mt-rRNA) and at least 45 different proteins.</text>
</comment>
<comment type="subcellular location">
    <subcellularLocation>
        <location evidence="2">Mitochondrion</location>
    </subcellularLocation>
</comment>
<comment type="similarity">
    <text evidence="3">Belongs to the mitochondrion-specific ribosomal protein mS23 family.</text>
</comment>
<reference key="1">
    <citation type="journal article" date="2002" name="Nature">
        <title>The genome sequence of Schizosaccharomyces pombe.</title>
        <authorList>
            <person name="Wood V."/>
            <person name="Gwilliam R."/>
            <person name="Rajandream M.A."/>
            <person name="Lyne M.H."/>
            <person name="Lyne R."/>
            <person name="Stewart A."/>
            <person name="Sgouros J.G."/>
            <person name="Peat N."/>
            <person name="Hayles J."/>
            <person name="Baker S.G."/>
            <person name="Basham D."/>
            <person name="Bowman S."/>
            <person name="Brooks K."/>
            <person name="Brown D."/>
            <person name="Brown S."/>
            <person name="Chillingworth T."/>
            <person name="Churcher C.M."/>
            <person name="Collins M."/>
            <person name="Connor R."/>
            <person name="Cronin A."/>
            <person name="Davis P."/>
            <person name="Feltwell T."/>
            <person name="Fraser A."/>
            <person name="Gentles S."/>
            <person name="Goble A."/>
            <person name="Hamlin N."/>
            <person name="Harris D.E."/>
            <person name="Hidalgo J."/>
            <person name="Hodgson G."/>
            <person name="Holroyd S."/>
            <person name="Hornsby T."/>
            <person name="Howarth S."/>
            <person name="Huckle E.J."/>
            <person name="Hunt S."/>
            <person name="Jagels K."/>
            <person name="James K.D."/>
            <person name="Jones L."/>
            <person name="Jones M."/>
            <person name="Leather S."/>
            <person name="McDonald S."/>
            <person name="McLean J."/>
            <person name="Mooney P."/>
            <person name="Moule S."/>
            <person name="Mungall K.L."/>
            <person name="Murphy L.D."/>
            <person name="Niblett D."/>
            <person name="Odell C."/>
            <person name="Oliver K."/>
            <person name="O'Neil S."/>
            <person name="Pearson D."/>
            <person name="Quail M.A."/>
            <person name="Rabbinowitsch E."/>
            <person name="Rutherford K.M."/>
            <person name="Rutter S."/>
            <person name="Saunders D."/>
            <person name="Seeger K."/>
            <person name="Sharp S."/>
            <person name="Skelton J."/>
            <person name="Simmonds M.N."/>
            <person name="Squares R."/>
            <person name="Squares S."/>
            <person name="Stevens K."/>
            <person name="Taylor K."/>
            <person name="Taylor R.G."/>
            <person name="Tivey A."/>
            <person name="Walsh S.V."/>
            <person name="Warren T."/>
            <person name="Whitehead S."/>
            <person name="Woodward J.R."/>
            <person name="Volckaert G."/>
            <person name="Aert R."/>
            <person name="Robben J."/>
            <person name="Grymonprez B."/>
            <person name="Weltjens I."/>
            <person name="Vanstreels E."/>
            <person name="Rieger M."/>
            <person name="Schaefer M."/>
            <person name="Mueller-Auer S."/>
            <person name="Gabel C."/>
            <person name="Fuchs M."/>
            <person name="Duesterhoeft A."/>
            <person name="Fritzc C."/>
            <person name="Holzer E."/>
            <person name="Moestl D."/>
            <person name="Hilbert H."/>
            <person name="Borzym K."/>
            <person name="Langer I."/>
            <person name="Beck A."/>
            <person name="Lehrach H."/>
            <person name="Reinhardt R."/>
            <person name="Pohl T.M."/>
            <person name="Eger P."/>
            <person name="Zimmermann W."/>
            <person name="Wedler H."/>
            <person name="Wambutt R."/>
            <person name="Purnelle B."/>
            <person name="Goffeau A."/>
            <person name="Cadieu E."/>
            <person name="Dreano S."/>
            <person name="Gloux S."/>
            <person name="Lelaure V."/>
            <person name="Mottier S."/>
            <person name="Galibert F."/>
            <person name="Aves S.J."/>
            <person name="Xiang Z."/>
            <person name="Hunt C."/>
            <person name="Moore K."/>
            <person name="Hurst S.M."/>
            <person name="Lucas M."/>
            <person name="Rochet M."/>
            <person name="Gaillardin C."/>
            <person name="Tallada V.A."/>
            <person name="Garzon A."/>
            <person name="Thode G."/>
            <person name="Daga R.R."/>
            <person name="Cruzado L."/>
            <person name="Jimenez J."/>
            <person name="Sanchez M."/>
            <person name="del Rey F."/>
            <person name="Benito J."/>
            <person name="Dominguez A."/>
            <person name="Revuelta J.L."/>
            <person name="Moreno S."/>
            <person name="Armstrong J."/>
            <person name="Forsburg S.L."/>
            <person name="Cerutti L."/>
            <person name="Lowe T."/>
            <person name="McCombie W.R."/>
            <person name="Paulsen I."/>
            <person name="Potashkin J."/>
            <person name="Shpakovski G.V."/>
            <person name="Ussery D."/>
            <person name="Barrell B.G."/>
            <person name="Nurse P."/>
        </authorList>
    </citation>
    <scope>NUCLEOTIDE SEQUENCE [LARGE SCALE GENOMIC DNA]</scope>
    <source>
        <strain>972 / ATCC 24843</strain>
    </source>
</reference>
<reference key="2">
    <citation type="journal article" date="2006" name="Nat. Biotechnol.">
        <title>ORFeome cloning and global analysis of protein localization in the fission yeast Schizosaccharomyces pombe.</title>
        <authorList>
            <person name="Matsuyama A."/>
            <person name="Arai R."/>
            <person name="Yashiroda Y."/>
            <person name="Shirai A."/>
            <person name="Kamata A."/>
            <person name="Sekido S."/>
            <person name="Kobayashi Y."/>
            <person name="Hashimoto A."/>
            <person name="Hamamoto M."/>
            <person name="Hiraoka Y."/>
            <person name="Horinouchi S."/>
            <person name="Yoshida M."/>
        </authorList>
    </citation>
    <scope>SUBCELLULAR LOCATION [LARGE SCALE ANALYSIS]</scope>
</reference>
<gene>
    <name type="primary">rsm25</name>
    <name type="ORF">SPBC16A3.04</name>
</gene>
<organism>
    <name type="scientific">Schizosaccharomyces pombe (strain 972 / ATCC 24843)</name>
    <name type="common">Fission yeast</name>
    <dbReference type="NCBI Taxonomy" id="284812"/>
    <lineage>
        <taxon>Eukaryota</taxon>
        <taxon>Fungi</taxon>
        <taxon>Dikarya</taxon>
        <taxon>Ascomycota</taxon>
        <taxon>Taphrinomycotina</taxon>
        <taxon>Schizosaccharomycetes</taxon>
        <taxon>Schizosaccharomycetales</taxon>
        <taxon>Schizosaccharomycetaceae</taxon>
        <taxon>Schizosaccharomyces</taxon>
    </lineage>
</organism>